<name>Y265_SODGM</name>
<organism>
    <name type="scientific">Sodalis glossinidius (strain morsitans)</name>
    <dbReference type="NCBI Taxonomy" id="343509"/>
    <lineage>
        <taxon>Bacteria</taxon>
        <taxon>Pseudomonadati</taxon>
        <taxon>Pseudomonadota</taxon>
        <taxon>Gammaproteobacteria</taxon>
        <taxon>Enterobacterales</taxon>
        <taxon>Bruguierivoracaceae</taxon>
        <taxon>Sodalis</taxon>
    </lineage>
</organism>
<sequence length="215" mass="22989">MKRTKQINHASFRKHWRAYRMAPVALAVGAVFVLAGCEKSDENVSLYMNSDDCARANPSLSEQCTTAYNAAQQEAVKTAPKYASRADCVAEFGEEQCTQVPAQAGMAAESQHSGSMWMPLMAGYMMGRMMVGGYSQQPLFTSLAANSPARGQFVDARGRNYGASTSGRSMTVPKTALAPKPATTQTITRGGFGETVAKQNALRSSSATPHRTMGG</sequence>
<proteinExistence type="inferred from homology"/>
<protein>
    <recommendedName>
        <fullName evidence="1">UPF0441 protein SG0265</fullName>
    </recommendedName>
</protein>
<feature type="chain" id="PRO_0000293647" description="UPF0441 protein SG0265">
    <location>
        <begin position="1"/>
        <end position="215"/>
    </location>
</feature>
<comment type="similarity">
    <text evidence="1">Belongs to the UPF0441 family.</text>
</comment>
<reference key="1">
    <citation type="journal article" date="2006" name="Genome Res.">
        <title>Massive genome erosion and functional adaptations provide insights into the symbiotic lifestyle of Sodalis glossinidius in the tsetse host.</title>
        <authorList>
            <person name="Toh H."/>
            <person name="Weiss B.L."/>
            <person name="Perkin S.A.H."/>
            <person name="Yamashita A."/>
            <person name="Oshima K."/>
            <person name="Hattori M."/>
            <person name="Aksoy S."/>
        </authorList>
    </citation>
    <scope>NUCLEOTIDE SEQUENCE [LARGE SCALE GENOMIC DNA]</scope>
    <source>
        <strain>morsitans</strain>
    </source>
</reference>
<evidence type="ECO:0000255" key="1">
    <source>
        <dbReference type="HAMAP-Rule" id="MF_01188"/>
    </source>
</evidence>
<accession>Q2NWD5</accession>
<dbReference type="EMBL" id="AP008232">
    <property type="protein sequence ID" value="BAE73540.1"/>
    <property type="molecule type" value="Genomic_DNA"/>
</dbReference>
<dbReference type="RefSeq" id="WP_011410128.1">
    <property type="nucleotide sequence ID" value="NC_007712.1"/>
</dbReference>
<dbReference type="STRING" id="343509.SG0265"/>
<dbReference type="KEGG" id="sgl:SG0265"/>
<dbReference type="eggNOG" id="COG5463">
    <property type="taxonomic scope" value="Bacteria"/>
</dbReference>
<dbReference type="HOGENOM" id="CLU_095624_0_0_6"/>
<dbReference type="OrthoDB" id="5903948at2"/>
<dbReference type="Proteomes" id="UP000001932">
    <property type="component" value="Chromosome"/>
</dbReference>
<dbReference type="HAMAP" id="MF_01188">
    <property type="entry name" value="UPF0441"/>
    <property type="match status" value="1"/>
</dbReference>
<dbReference type="InterPro" id="IPR009576">
    <property type="entry name" value="Biofilm_formation_YgiB"/>
</dbReference>
<dbReference type="NCBIfam" id="NF008655">
    <property type="entry name" value="PRK11653.1"/>
    <property type="match status" value="1"/>
</dbReference>
<dbReference type="Pfam" id="PF06693">
    <property type="entry name" value="DUF1190"/>
    <property type="match status" value="1"/>
</dbReference>
<gene>
    <name type="ordered locus">SG0265</name>
</gene>